<proteinExistence type="inferred from homology"/>
<name>RF3_XYLFT</name>
<feature type="chain" id="PRO_0000210986" description="Peptide chain release factor 3">
    <location>
        <begin position="1"/>
        <end position="534"/>
    </location>
</feature>
<feature type="domain" description="tr-type G">
    <location>
        <begin position="9"/>
        <end position="278"/>
    </location>
</feature>
<feature type="binding site" evidence="1">
    <location>
        <begin position="18"/>
        <end position="25"/>
    </location>
    <ligand>
        <name>GTP</name>
        <dbReference type="ChEBI" id="CHEBI:37565"/>
    </ligand>
</feature>
<feature type="binding site" evidence="1">
    <location>
        <begin position="86"/>
        <end position="90"/>
    </location>
    <ligand>
        <name>GTP</name>
        <dbReference type="ChEBI" id="CHEBI:37565"/>
    </ligand>
</feature>
<feature type="binding site" evidence="1">
    <location>
        <begin position="140"/>
        <end position="143"/>
    </location>
    <ligand>
        <name>GTP</name>
        <dbReference type="ChEBI" id="CHEBI:37565"/>
    </ligand>
</feature>
<organism>
    <name type="scientific">Xylella fastidiosa (strain Temecula1 / ATCC 700964)</name>
    <dbReference type="NCBI Taxonomy" id="183190"/>
    <lineage>
        <taxon>Bacteria</taxon>
        <taxon>Pseudomonadati</taxon>
        <taxon>Pseudomonadota</taxon>
        <taxon>Gammaproteobacteria</taxon>
        <taxon>Lysobacterales</taxon>
        <taxon>Lysobacteraceae</taxon>
        <taxon>Xylella</taxon>
    </lineage>
</organism>
<gene>
    <name evidence="1" type="primary">prfC</name>
    <name type="ordered locus">PD_0142</name>
</gene>
<protein>
    <recommendedName>
        <fullName evidence="1">Peptide chain release factor 3</fullName>
        <shortName evidence="1">RF-3</shortName>
    </recommendedName>
</protein>
<evidence type="ECO:0000255" key="1">
    <source>
        <dbReference type="HAMAP-Rule" id="MF_00072"/>
    </source>
</evidence>
<keyword id="KW-0963">Cytoplasm</keyword>
<keyword id="KW-0342">GTP-binding</keyword>
<keyword id="KW-0547">Nucleotide-binding</keyword>
<keyword id="KW-0648">Protein biosynthesis</keyword>
<keyword id="KW-1185">Reference proteome</keyword>
<sequence>MSEVVAETARRRTFAIISHPDAGKTTLTEKLLLFGGAIQMAGSVKSRKAVRHATSDWMTLEKERGISVTSSVMQFPYEGKIINLLDTPGHADFGEDTYRVLTAVDSALMVIDVAKGVEERTIKLMEVCRLRDTPIMTFINKLDREGKNPIELLDEVERVLGIQCAPVTWPIGMGKRLRGVVNLLTNEVHLYEPGRNFTRQDSIIFTSLEAPGLAERIGEQMLADLHEELELIQGASACFDPTEYLGGRQTPVFFGSGVNNFGVQPLLDFFVEHAPSPQQRDTTSRVVLPTEEKLTGFVFKIQANMDPQHRDRVAFMRVCSGRFTAGMKAFHVRSSKDLKLANALTFMASDRESVAEAFPGDVIGIHNHGRVSIGDTFTEGEVLSFTGIPSFAPELFRRACLGDPLKLKQLQKGLTQLSEEGATQFFRPLMSNDLILGAVGMLQFDVVAYRLKNEYGVDATFEPVSITTARWVYCDNSKTLEEFREKNVTNLAVDASGELVYLAPTRVNLQLAQERAPEIHFFATREHAYAVGVD</sequence>
<comment type="function">
    <text evidence="1">Increases the formation of ribosomal termination complexes and stimulates activities of RF-1 and RF-2. It binds guanine nucleotides and has strong preference for UGA stop codons. It may interact directly with the ribosome. The stimulation of RF-1 and RF-2 is significantly reduced by GTP and GDP, but not by GMP.</text>
</comment>
<comment type="subcellular location">
    <subcellularLocation>
        <location evidence="1">Cytoplasm</location>
    </subcellularLocation>
</comment>
<comment type="similarity">
    <text evidence="1">Belongs to the TRAFAC class translation factor GTPase superfamily. Classic translation factor GTPase family. PrfC subfamily.</text>
</comment>
<dbReference type="EMBL" id="AE009442">
    <property type="protein sequence ID" value="AAO28036.1"/>
    <property type="molecule type" value="Genomic_DNA"/>
</dbReference>
<dbReference type="RefSeq" id="WP_004087188.1">
    <property type="nucleotide sequence ID" value="NC_004556.1"/>
</dbReference>
<dbReference type="SMR" id="Q87F03"/>
<dbReference type="KEGG" id="xft:PD_0142"/>
<dbReference type="HOGENOM" id="CLU_002794_2_1_6"/>
<dbReference type="Proteomes" id="UP000002516">
    <property type="component" value="Chromosome"/>
</dbReference>
<dbReference type="GO" id="GO:0005829">
    <property type="term" value="C:cytosol"/>
    <property type="evidence" value="ECO:0007669"/>
    <property type="project" value="TreeGrafter"/>
</dbReference>
<dbReference type="GO" id="GO:0005525">
    <property type="term" value="F:GTP binding"/>
    <property type="evidence" value="ECO:0007669"/>
    <property type="project" value="UniProtKB-UniRule"/>
</dbReference>
<dbReference type="GO" id="GO:0003924">
    <property type="term" value="F:GTPase activity"/>
    <property type="evidence" value="ECO:0007669"/>
    <property type="project" value="InterPro"/>
</dbReference>
<dbReference type="GO" id="GO:0097216">
    <property type="term" value="F:guanosine tetraphosphate binding"/>
    <property type="evidence" value="ECO:0007669"/>
    <property type="project" value="UniProtKB-ARBA"/>
</dbReference>
<dbReference type="GO" id="GO:0016150">
    <property type="term" value="F:translation release factor activity, codon nonspecific"/>
    <property type="evidence" value="ECO:0007669"/>
    <property type="project" value="TreeGrafter"/>
</dbReference>
<dbReference type="GO" id="GO:0016149">
    <property type="term" value="F:translation release factor activity, codon specific"/>
    <property type="evidence" value="ECO:0007669"/>
    <property type="project" value="UniProtKB-UniRule"/>
</dbReference>
<dbReference type="GO" id="GO:0006449">
    <property type="term" value="P:regulation of translational termination"/>
    <property type="evidence" value="ECO:0007669"/>
    <property type="project" value="UniProtKB-UniRule"/>
</dbReference>
<dbReference type="CDD" id="cd04169">
    <property type="entry name" value="RF3"/>
    <property type="match status" value="1"/>
</dbReference>
<dbReference type="CDD" id="cd03689">
    <property type="entry name" value="RF3_II"/>
    <property type="match status" value="1"/>
</dbReference>
<dbReference type="CDD" id="cd16259">
    <property type="entry name" value="RF3_III"/>
    <property type="match status" value="1"/>
</dbReference>
<dbReference type="FunFam" id="3.30.70.3280:FF:000001">
    <property type="entry name" value="Peptide chain release factor 3"/>
    <property type="match status" value="1"/>
</dbReference>
<dbReference type="FunFam" id="3.40.50.300:FF:000542">
    <property type="entry name" value="Peptide chain release factor 3"/>
    <property type="match status" value="1"/>
</dbReference>
<dbReference type="Gene3D" id="3.40.50.300">
    <property type="entry name" value="P-loop containing nucleotide triphosphate hydrolases"/>
    <property type="match status" value="2"/>
</dbReference>
<dbReference type="Gene3D" id="3.30.70.3280">
    <property type="entry name" value="Peptide chain release factor 3, domain III"/>
    <property type="match status" value="1"/>
</dbReference>
<dbReference type="HAMAP" id="MF_00072">
    <property type="entry name" value="Rel_fac_3"/>
    <property type="match status" value="1"/>
</dbReference>
<dbReference type="InterPro" id="IPR053905">
    <property type="entry name" value="EF-G-like_DII"/>
</dbReference>
<dbReference type="InterPro" id="IPR035647">
    <property type="entry name" value="EFG_III/V"/>
</dbReference>
<dbReference type="InterPro" id="IPR031157">
    <property type="entry name" value="G_TR_CS"/>
</dbReference>
<dbReference type="InterPro" id="IPR027417">
    <property type="entry name" value="P-loop_NTPase"/>
</dbReference>
<dbReference type="InterPro" id="IPR004548">
    <property type="entry name" value="PrfC"/>
</dbReference>
<dbReference type="InterPro" id="IPR032090">
    <property type="entry name" value="RF3_C"/>
</dbReference>
<dbReference type="InterPro" id="IPR038467">
    <property type="entry name" value="RF3_dom_3_sf"/>
</dbReference>
<dbReference type="InterPro" id="IPR041732">
    <property type="entry name" value="RF3_GTP-bd"/>
</dbReference>
<dbReference type="InterPro" id="IPR005225">
    <property type="entry name" value="Small_GTP-bd"/>
</dbReference>
<dbReference type="InterPro" id="IPR000795">
    <property type="entry name" value="T_Tr_GTP-bd_dom"/>
</dbReference>
<dbReference type="InterPro" id="IPR009000">
    <property type="entry name" value="Transl_B-barrel_sf"/>
</dbReference>
<dbReference type="NCBIfam" id="TIGR00503">
    <property type="entry name" value="prfC"/>
    <property type="match status" value="1"/>
</dbReference>
<dbReference type="NCBIfam" id="NF001964">
    <property type="entry name" value="PRK00741.1"/>
    <property type="match status" value="1"/>
</dbReference>
<dbReference type="NCBIfam" id="TIGR00231">
    <property type="entry name" value="small_GTP"/>
    <property type="match status" value="1"/>
</dbReference>
<dbReference type="PANTHER" id="PTHR43556">
    <property type="entry name" value="PEPTIDE CHAIN RELEASE FACTOR RF3"/>
    <property type="match status" value="1"/>
</dbReference>
<dbReference type="PANTHER" id="PTHR43556:SF2">
    <property type="entry name" value="PEPTIDE CHAIN RELEASE FACTOR RF3"/>
    <property type="match status" value="1"/>
</dbReference>
<dbReference type="Pfam" id="PF22042">
    <property type="entry name" value="EF-G_D2"/>
    <property type="match status" value="1"/>
</dbReference>
<dbReference type="Pfam" id="PF00009">
    <property type="entry name" value="GTP_EFTU"/>
    <property type="match status" value="1"/>
</dbReference>
<dbReference type="Pfam" id="PF16658">
    <property type="entry name" value="RF3_C"/>
    <property type="match status" value="1"/>
</dbReference>
<dbReference type="PRINTS" id="PR00315">
    <property type="entry name" value="ELONGATNFCT"/>
</dbReference>
<dbReference type="SUPFAM" id="SSF54980">
    <property type="entry name" value="EF-G C-terminal domain-like"/>
    <property type="match status" value="1"/>
</dbReference>
<dbReference type="SUPFAM" id="SSF52540">
    <property type="entry name" value="P-loop containing nucleoside triphosphate hydrolases"/>
    <property type="match status" value="1"/>
</dbReference>
<dbReference type="SUPFAM" id="SSF50447">
    <property type="entry name" value="Translation proteins"/>
    <property type="match status" value="1"/>
</dbReference>
<dbReference type="PROSITE" id="PS00301">
    <property type="entry name" value="G_TR_1"/>
    <property type="match status" value="1"/>
</dbReference>
<dbReference type="PROSITE" id="PS51722">
    <property type="entry name" value="G_TR_2"/>
    <property type="match status" value="1"/>
</dbReference>
<accession>Q87F03</accession>
<reference key="1">
    <citation type="journal article" date="2003" name="J. Bacteriol.">
        <title>Comparative analyses of the complete genome sequences of Pierce's disease and citrus variegated chlorosis strains of Xylella fastidiosa.</title>
        <authorList>
            <person name="Van Sluys M.A."/>
            <person name="de Oliveira M.C."/>
            <person name="Monteiro-Vitorello C.B."/>
            <person name="Miyaki C.Y."/>
            <person name="Furlan L.R."/>
            <person name="Camargo L.E.A."/>
            <person name="da Silva A.C.R."/>
            <person name="Moon D.H."/>
            <person name="Takita M.A."/>
            <person name="Lemos E.G.M."/>
            <person name="Machado M.A."/>
            <person name="Ferro M.I.T."/>
            <person name="da Silva F.R."/>
            <person name="Goldman M.H.S."/>
            <person name="Goldman G.H."/>
            <person name="Lemos M.V.F."/>
            <person name="El-Dorry H."/>
            <person name="Tsai S.M."/>
            <person name="Carrer H."/>
            <person name="Carraro D.M."/>
            <person name="de Oliveira R.C."/>
            <person name="Nunes L.R."/>
            <person name="Siqueira W.J."/>
            <person name="Coutinho L.L."/>
            <person name="Kimura E.T."/>
            <person name="Ferro E.S."/>
            <person name="Harakava R."/>
            <person name="Kuramae E.E."/>
            <person name="Marino C.L."/>
            <person name="Giglioti E."/>
            <person name="Abreu I.L."/>
            <person name="Alves L.M.C."/>
            <person name="do Amaral A.M."/>
            <person name="Baia G.S."/>
            <person name="Blanco S.R."/>
            <person name="Brito M.S."/>
            <person name="Cannavan F.S."/>
            <person name="Celestino A.V."/>
            <person name="da Cunha A.F."/>
            <person name="Fenille R.C."/>
            <person name="Ferro J.A."/>
            <person name="Formighieri E.F."/>
            <person name="Kishi L.T."/>
            <person name="Leoni S.G."/>
            <person name="Oliveira A.R."/>
            <person name="Rosa V.E. Jr."/>
            <person name="Sassaki F.T."/>
            <person name="Sena J.A.D."/>
            <person name="de Souza A.A."/>
            <person name="Truffi D."/>
            <person name="Tsukumo F."/>
            <person name="Yanai G.M."/>
            <person name="Zaros L.G."/>
            <person name="Civerolo E.L."/>
            <person name="Simpson A.J.G."/>
            <person name="Almeida N.F. Jr."/>
            <person name="Setubal J.C."/>
            <person name="Kitajima J.P."/>
        </authorList>
    </citation>
    <scope>NUCLEOTIDE SEQUENCE [LARGE SCALE GENOMIC DNA]</scope>
    <source>
        <strain>Temecula1 / ATCC 700964</strain>
    </source>
</reference>